<comment type="function">
    <text evidence="1">Efflux pump driven by the proton motive force. Confers resistance to a broad spectrum of chemically unrelated drugs (By similarity).</text>
</comment>
<comment type="subunit">
    <text evidence="1">Monomer.</text>
</comment>
<comment type="subcellular location">
    <subcellularLocation>
        <location evidence="1">Cell inner membrane</location>
        <topology evidence="1">Multi-pass membrane protein</topology>
    </subcellularLocation>
</comment>
<comment type="similarity">
    <text evidence="3">Belongs to the major facilitator superfamily. MdfA family.</text>
</comment>
<sequence length="410" mass="44321">MQNKLASGARLGRQALLFPLCLVLYEFSTYIGNDMIQPGMLAVVEQYQAGIDWVPTSMTAYLAGGMFLQWLLGPLSDRIGRRPVMLAGVVWFIVTCLAILLAQNIEQFTLLRFLQGISLCFIGAVGYAAIQESFEEAVCIKITALMANVALIAPLLGPLVGAAWIHVLPWEGMFVLFAALAAISFFGLQRAMPETATRIGEKLSLKELGRDYKLVLKNGRFVAGALALGFVSLPLLAWIAQSPIIIITGEQLSSYEYGLLQVPIFGALIAGNLLLARLTSRRTVRSLIIMGGWPIMIGLLVAAAATVISSHAYLWMTAGLSIYAFGIGLANAGLVRLTLFASDMSKGTVSAAMGMLQMLIFTVGIEISKHAWLNGGNGLFNLFNLVNGILWLSLMVIFLKDKQMGNSHEG</sequence>
<evidence type="ECO:0000250" key="1"/>
<evidence type="ECO:0000255" key="2"/>
<evidence type="ECO:0000305" key="3"/>
<gene>
    <name type="primary">mdfA</name>
    <name type="synonym">cmr</name>
    <name type="ordered locus">Z1069</name>
    <name type="ordered locus">ECs0922</name>
</gene>
<reference key="1">
    <citation type="journal article" date="2001" name="Nature">
        <title>Genome sequence of enterohaemorrhagic Escherichia coli O157:H7.</title>
        <authorList>
            <person name="Perna N.T."/>
            <person name="Plunkett G. III"/>
            <person name="Burland V."/>
            <person name="Mau B."/>
            <person name="Glasner J.D."/>
            <person name="Rose D.J."/>
            <person name="Mayhew G.F."/>
            <person name="Evans P.S."/>
            <person name="Gregor J."/>
            <person name="Kirkpatrick H.A."/>
            <person name="Posfai G."/>
            <person name="Hackett J."/>
            <person name="Klink S."/>
            <person name="Boutin A."/>
            <person name="Shao Y."/>
            <person name="Miller L."/>
            <person name="Grotbeck E.J."/>
            <person name="Davis N.W."/>
            <person name="Lim A."/>
            <person name="Dimalanta E.T."/>
            <person name="Potamousis K."/>
            <person name="Apodaca J."/>
            <person name="Anantharaman T.S."/>
            <person name="Lin J."/>
            <person name="Yen G."/>
            <person name="Schwartz D.C."/>
            <person name="Welch R.A."/>
            <person name="Blattner F.R."/>
        </authorList>
    </citation>
    <scope>NUCLEOTIDE SEQUENCE [LARGE SCALE GENOMIC DNA]</scope>
    <source>
        <strain>O157:H7 / EDL933 / ATCC 700927 / EHEC</strain>
    </source>
</reference>
<reference key="2">
    <citation type="journal article" date="2001" name="DNA Res.">
        <title>Complete genome sequence of enterohemorrhagic Escherichia coli O157:H7 and genomic comparison with a laboratory strain K-12.</title>
        <authorList>
            <person name="Hayashi T."/>
            <person name="Makino K."/>
            <person name="Ohnishi M."/>
            <person name="Kurokawa K."/>
            <person name="Ishii K."/>
            <person name="Yokoyama K."/>
            <person name="Han C.-G."/>
            <person name="Ohtsubo E."/>
            <person name="Nakayama K."/>
            <person name="Murata T."/>
            <person name="Tanaka M."/>
            <person name="Tobe T."/>
            <person name="Iida T."/>
            <person name="Takami H."/>
            <person name="Honda T."/>
            <person name="Sasakawa C."/>
            <person name="Ogasawara N."/>
            <person name="Yasunaga T."/>
            <person name="Kuhara S."/>
            <person name="Shiba T."/>
            <person name="Hattori M."/>
            <person name="Shinagawa H."/>
        </authorList>
    </citation>
    <scope>NUCLEOTIDE SEQUENCE [LARGE SCALE GENOMIC DNA]</scope>
    <source>
        <strain>O157:H7 / Sakai / RIMD 0509952 / EHEC</strain>
    </source>
</reference>
<organism>
    <name type="scientific">Escherichia coli O157:H7</name>
    <dbReference type="NCBI Taxonomy" id="83334"/>
    <lineage>
        <taxon>Bacteria</taxon>
        <taxon>Pseudomonadati</taxon>
        <taxon>Pseudomonadota</taxon>
        <taxon>Gammaproteobacteria</taxon>
        <taxon>Enterobacterales</taxon>
        <taxon>Enterobacteriaceae</taxon>
        <taxon>Escherichia</taxon>
    </lineage>
</organism>
<accession>P0AEZ0</accession>
<accession>P71226</accession>
<accession>P75807</accession>
<accession>Q46966</accession>
<proteinExistence type="inferred from homology"/>
<name>MDFA_ECO57</name>
<keyword id="KW-0046">Antibiotic resistance</keyword>
<keyword id="KW-0997">Cell inner membrane</keyword>
<keyword id="KW-1003">Cell membrane</keyword>
<keyword id="KW-0472">Membrane</keyword>
<keyword id="KW-1185">Reference proteome</keyword>
<keyword id="KW-0812">Transmembrane</keyword>
<keyword id="KW-1133">Transmembrane helix</keyword>
<keyword id="KW-0813">Transport</keyword>
<dbReference type="EMBL" id="AE005174">
    <property type="protein sequence ID" value="AAG55218.1"/>
    <property type="molecule type" value="Genomic_DNA"/>
</dbReference>
<dbReference type="EMBL" id="BA000007">
    <property type="protein sequence ID" value="BAB34345.1"/>
    <property type="molecule type" value="Genomic_DNA"/>
</dbReference>
<dbReference type="PIR" id="B90744">
    <property type="entry name" value="B90744"/>
</dbReference>
<dbReference type="PIR" id="F85594">
    <property type="entry name" value="F85594"/>
</dbReference>
<dbReference type="RefSeq" id="NP_308949.1">
    <property type="nucleotide sequence ID" value="NC_002695.1"/>
</dbReference>
<dbReference type="RefSeq" id="WP_001180089.1">
    <property type="nucleotide sequence ID" value="NZ_VOAI01000006.1"/>
</dbReference>
<dbReference type="SMR" id="P0AEZ0"/>
<dbReference type="STRING" id="155864.Z1069"/>
<dbReference type="GeneID" id="917662"/>
<dbReference type="KEGG" id="ece:Z1069"/>
<dbReference type="KEGG" id="ecs:ECs_0922"/>
<dbReference type="PATRIC" id="fig|386585.9.peg.1039"/>
<dbReference type="eggNOG" id="COG2814">
    <property type="taxonomic scope" value="Bacteria"/>
</dbReference>
<dbReference type="HOGENOM" id="CLU_001265_47_2_6"/>
<dbReference type="OMA" id="GNEWVPT"/>
<dbReference type="Proteomes" id="UP000000558">
    <property type="component" value="Chromosome"/>
</dbReference>
<dbReference type="Proteomes" id="UP000002519">
    <property type="component" value="Chromosome"/>
</dbReference>
<dbReference type="GO" id="GO:0005886">
    <property type="term" value="C:plasma membrane"/>
    <property type="evidence" value="ECO:0007669"/>
    <property type="project" value="UniProtKB-SubCell"/>
</dbReference>
<dbReference type="GO" id="GO:0015385">
    <property type="term" value="F:sodium:proton antiporter activity"/>
    <property type="evidence" value="ECO:0007669"/>
    <property type="project" value="TreeGrafter"/>
</dbReference>
<dbReference type="GO" id="GO:0046677">
    <property type="term" value="P:response to antibiotic"/>
    <property type="evidence" value="ECO:0007669"/>
    <property type="project" value="UniProtKB-KW"/>
</dbReference>
<dbReference type="GO" id="GO:1990961">
    <property type="term" value="P:xenobiotic detoxification by transmembrane export across the plasma membrane"/>
    <property type="evidence" value="ECO:0007669"/>
    <property type="project" value="TreeGrafter"/>
</dbReference>
<dbReference type="CDD" id="cd17320">
    <property type="entry name" value="MFS_MdfA_MDR_like"/>
    <property type="match status" value="1"/>
</dbReference>
<dbReference type="FunFam" id="1.20.1720.10:FF:000008">
    <property type="entry name" value="Multidrug transporter MdfA"/>
    <property type="match status" value="1"/>
</dbReference>
<dbReference type="Gene3D" id="1.20.1720.10">
    <property type="entry name" value="Multidrug resistance protein D"/>
    <property type="match status" value="1"/>
</dbReference>
<dbReference type="InterPro" id="IPR011701">
    <property type="entry name" value="MFS"/>
</dbReference>
<dbReference type="InterPro" id="IPR020846">
    <property type="entry name" value="MFS_dom"/>
</dbReference>
<dbReference type="InterPro" id="IPR036259">
    <property type="entry name" value="MFS_trans_sf"/>
</dbReference>
<dbReference type="InterPro" id="IPR005829">
    <property type="entry name" value="Sugar_transporter_CS"/>
</dbReference>
<dbReference type="NCBIfam" id="NF011931">
    <property type="entry name" value="PRK15402.1"/>
    <property type="match status" value="1"/>
</dbReference>
<dbReference type="PANTHER" id="PTHR23502">
    <property type="entry name" value="MAJOR FACILITATOR SUPERFAMILY"/>
    <property type="match status" value="1"/>
</dbReference>
<dbReference type="PANTHER" id="PTHR23502:SF43">
    <property type="entry name" value="MULTIDRUG TRANSPORTER MDFA"/>
    <property type="match status" value="1"/>
</dbReference>
<dbReference type="Pfam" id="PF07690">
    <property type="entry name" value="MFS_1"/>
    <property type="match status" value="1"/>
</dbReference>
<dbReference type="SUPFAM" id="SSF103473">
    <property type="entry name" value="MFS general substrate transporter"/>
    <property type="match status" value="1"/>
</dbReference>
<dbReference type="PROSITE" id="PS50850">
    <property type="entry name" value="MFS"/>
    <property type="match status" value="1"/>
</dbReference>
<feature type="chain" id="PRO_0000173332" description="Multidrug transporter MdfA">
    <location>
        <begin position="1"/>
        <end position="410"/>
    </location>
</feature>
<feature type="topological domain" description="Cytoplasmic" evidence="2">
    <location>
        <begin position="1"/>
        <end position="15"/>
    </location>
</feature>
<feature type="transmembrane region" description="Helical" evidence="2">
    <location>
        <begin position="16"/>
        <end position="36"/>
    </location>
</feature>
<feature type="topological domain" description="Periplasmic" evidence="2">
    <location>
        <begin position="37"/>
        <end position="52"/>
    </location>
</feature>
<feature type="transmembrane region" description="Helical" evidence="2">
    <location>
        <begin position="53"/>
        <end position="73"/>
    </location>
</feature>
<feature type="topological domain" description="Cytoplasmic" evidence="2">
    <location>
        <begin position="74"/>
        <end position="82"/>
    </location>
</feature>
<feature type="transmembrane region" description="Helical" evidence="2">
    <location>
        <begin position="83"/>
        <end position="103"/>
    </location>
</feature>
<feature type="topological domain" description="Periplasmic" evidence="2">
    <location>
        <begin position="104"/>
        <end position="109"/>
    </location>
</feature>
<feature type="transmembrane region" description="Helical" evidence="2">
    <location>
        <begin position="110"/>
        <end position="130"/>
    </location>
</feature>
<feature type="topological domain" description="Cytoplasmic" evidence="2">
    <location>
        <begin position="131"/>
        <end position="144"/>
    </location>
</feature>
<feature type="transmembrane region" description="Helical" evidence="2">
    <location>
        <begin position="145"/>
        <end position="165"/>
    </location>
</feature>
<feature type="topological domain" description="Periplasmic" evidence="2">
    <location>
        <position position="166"/>
    </location>
</feature>
<feature type="transmembrane region" description="Helical" evidence="2">
    <location>
        <begin position="167"/>
        <end position="187"/>
    </location>
</feature>
<feature type="topological domain" description="Cytoplasmic" evidence="2">
    <location>
        <begin position="188"/>
        <end position="226"/>
    </location>
</feature>
<feature type="transmembrane region" description="Helical" evidence="2">
    <location>
        <begin position="227"/>
        <end position="247"/>
    </location>
</feature>
<feature type="topological domain" description="Periplasmic" evidence="2">
    <location>
        <begin position="248"/>
        <end position="255"/>
    </location>
</feature>
<feature type="transmembrane region" description="Helical" evidence="2">
    <location>
        <begin position="256"/>
        <end position="276"/>
    </location>
</feature>
<feature type="topological domain" description="Cytoplasmic" evidence="2">
    <location>
        <begin position="277"/>
        <end position="287"/>
    </location>
</feature>
<feature type="transmembrane region" description="Helical" evidence="2">
    <location>
        <begin position="288"/>
        <end position="308"/>
    </location>
</feature>
<feature type="topological domain" description="Periplasmic" evidence="2">
    <location>
        <begin position="309"/>
        <end position="314"/>
    </location>
</feature>
<feature type="transmembrane region" description="Helical" evidence="2">
    <location>
        <begin position="315"/>
        <end position="335"/>
    </location>
</feature>
<feature type="topological domain" description="Cytoplasmic" evidence="2">
    <location>
        <begin position="336"/>
        <end position="346"/>
    </location>
</feature>
<feature type="transmembrane region" description="Helical" evidence="2">
    <location>
        <begin position="347"/>
        <end position="367"/>
    </location>
</feature>
<feature type="topological domain" description="Periplasmic" evidence="2">
    <location>
        <begin position="368"/>
        <end position="378"/>
    </location>
</feature>
<feature type="transmembrane region" description="Helical" evidence="2">
    <location>
        <begin position="379"/>
        <end position="399"/>
    </location>
</feature>
<feature type="topological domain" description="Cytoplasmic" evidence="2">
    <location>
        <begin position="400"/>
        <end position="410"/>
    </location>
</feature>
<protein>
    <recommendedName>
        <fullName>Multidrug transporter MdfA</fullName>
    </recommendedName>
    <alternativeName>
        <fullName>Chloramphenicol resistance pump Cmr</fullName>
    </alternativeName>
</protein>